<proteinExistence type="evidence at protein level"/>
<name>SA185_YEAST</name>
<evidence type="ECO:0000256" key="1">
    <source>
        <dbReference type="SAM" id="MobiDB-lite"/>
    </source>
</evidence>
<evidence type="ECO:0000269" key="2">
    <source>
    </source>
</evidence>
<evidence type="ECO:0000305" key="3"/>
<evidence type="ECO:0007744" key="4">
    <source>
    </source>
</evidence>
<gene>
    <name type="primary">SAP185</name>
    <name type="ordered locus">YJL098W</name>
    <name type="ORF">J0840</name>
</gene>
<reference key="1">
    <citation type="journal article" date="1996" name="Mol. Cell. Biol.">
        <title>The SAPs, a new family of proteins, associate and function positively with the SIT4 phosphatase.</title>
        <authorList>
            <person name="Luke M.M."/>
            <person name="della Seta F."/>
            <person name="di Como C.J."/>
            <person name="Sugimoto H."/>
            <person name="Kobayashi R."/>
            <person name="Arndt K.T."/>
        </authorList>
    </citation>
    <scope>NUCLEOTIDE SEQUENCE [GENOMIC DNA]</scope>
</reference>
<reference key="2">
    <citation type="journal article" date="1994" name="Yeast">
        <title>Sequence and function analysis of a 9.74 kb fragment of Saccharomyces cerevisiae chromosome X including the BCK1 gene.</title>
        <authorList>
            <person name="Miosga T."/>
            <person name="Boles E."/>
            <person name="Schaaff-Gerstenschlaeger I."/>
            <person name="Schmitt S."/>
            <person name="Zimmermann F.K."/>
        </authorList>
    </citation>
    <scope>NUCLEOTIDE SEQUENCE [GENOMIC DNA]</scope>
    <source>
        <strain>ATCC 204508 / S288c</strain>
    </source>
</reference>
<reference key="3">
    <citation type="journal article" date="1996" name="EMBO J.">
        <title>Complete nucleotide sequence of Saccharomyces cerevisiae chromosome X.</title>
        <authorList>
            <person name="Galibert F."/>
            <person name="Alexandraki D."/>
            <person name="Baur A."/>
            <person name="Boles E."/>
            <person name="Chalwatzis N."/>
            <person name="Chuat J.-C."/>
            <person name="Coster F."/>
            <person name="Cziepluch C."/>
            <person name="de Haan M."/>
            <person name="Domdey H."/>
            <person name="Durand P."/>
            <person name="Entian K.-D."/>
            <person name="Gatius M."/>
            <person name="Goffeau A."/>
            <person name="Grivell L.A."/>
            <person name="Hennemann A."/>
            <person name="Herbert C.J."/>
            <person name="Heumann K."/>
            <person name="Hilger F."/>
            <person name="Hollenberg C.P."/>
            <person name="Huang M.-E."/>
            <person name="Jacq C."/>
            <person name="Jauniaux J.-C."/>
            <person name="Katsoulou C."/>
            <person name="Kirchrath L."/>
            <person name="Kleine K."/>
            <person name="Kordes E."/>
            <person name="Koetter P."/>
            <person name="Liebl S."/>
            <person name="Louis E.J."/>
            <person name="Manus V."/>
            <person name="Mewes H.-W."/>
            <person name="Miosga T."/>
            <person name="Obermaier B."/>
            <person name="Perea J."/>
            <person name="Pohl T.M."/>
            <person name="Portetelle D."/>
            <person name="Pujol A."/>
            <person name="Purnelle B."/>
            <person name="Ramezani Rad M."/>
            <person name="Rasmussen S.W."/>
            <person name="Rose M."/>
            <person name="Rossau R."/>
            <person name="Schaaff-Gerstenschlaeger I."/>
            <person name="Smits P.H.M."/>
            <person name="Scarcez T."/>
            <person name="Soriano N."/>
            <person name="To Van D."/>
            <person name="Tzermia M."/>
            <person name="Van Broekhoven A."/>
            <person name="Vandenbol M."/>
            <person name="Wedler H."/>
            <person name="von Wettstein D."/>
            <person name="Wambutt R."/>
            <person name="Zagulski M."/>
            <person name="Zollner A."/>
            <person name="Karpfinger-Hartl L."/>
        </authorList>
    </citation>
    <scope>NUCLEOTIDE SEQUENCE [LARGE SCALE GENOMIC DNA]</scope>
    <source>
        <strain>ATCC 204508 / S288c</strain>
    </source>
</reference>
<reference key="4">
    <citation type="journal article" date="2014" name="G3 (Bethesda)">
        <title>The reference genome sequence of Saccharomyces cerevisiae: Then and now.</title>
        <authorList>
            <person name="Engel S.R."/>
            <person name="Dietrich F.S."/>
            <person name="Fisk D.G."/>
            <person name="Binkley G."/>
            <person name="Balakrishnan R."/>
            <person name="Costanzo M.C."/>
            <person name="Dwight S.S."/>
            <person name="Hitz B.C."/>
            <person name="Karra K."/>
            <person name="Nash R.S."/>
            <person name="Weng S."/>
            <person name="Wong E.D."/>
            <person name="Lloyd P."/>
            <person name="Skrzypek M.S."/>
            <person name="Miyasato S.R."/>
            <person name="Simison M."/>
            <person name="Cherry J.M."/>
        </authorList>
    </citation>
    <scope>GENOME REANNOTATION</scope>
    <source>
        <strain>ATCC 204508 / S288c</strain>
    </source>
</reference>
<reference key="5">
    <citation type="journal article" date="1995" name="Yeast">
        <title>A 37.5 kb region of yeast chromosome X includes the SME1, MEF2, GSH1 and CSD3 genes, a TCP-1-related gene, an open reading frame similar to the DAL80 gene, and a tRNA(Arg).</title>
        <authorList>
            <person name="Rasmussen S.W."/>
        </authorList>
    </citation>
    <scope>NUCLEOTIDE SEQUENCE [GENOMIC DNA] OF 1-853</scope>
    <source>
        <strain>ATCC 96604 / S288c / FY1679</strain>
    </source>
</reference>
<reference key="6">
    <citation type="journal article" date="2003" name="Nature">
        <title>Global analysis of protein expression in yeast.</title>
        <authorList>
            <person name="Ghaemmaghami S."/>
            <person name="Huh W.-K."/>
            <person name="Bower K."/>
            <person name="Howson R.W."/>
            <person name="Belle A."/>
            <person name="Dephoure N."/>
            <person name="O'Shea E.K."/>
            <person name="Weissman J.S."/>
        </authorList>
    </citation>
    <scope>LEVEL OF PROTEIN EXPRESSION [LARGE SCALE ANALYSIS]</scope>
</reference>
<reference key="7">
    <citation type="journal article" date="2008" name="Mol. Cell. Proteomics">
        <title>A multidimensional chromatography technology for in-depth phosphoproteome analysis.</title>
        <authorList>
            <person name="Albuquerque C.P."/>
            <person name="Smolka M.B."/>
            <person name="Payne S.H."/>
            <person name="Bafna V."/>
            <person name="Eng J."/>
            <person name="Zhou H."/>
        </authorList>
    </citation>
    <scope>IDENTIFICATION BY MASS SPECTROMETRY [LARGE SCALE ANALYSIS]</scope>
</reference>
<reference key="8">
    <citation type="journal article" date="2012" name="Proteomics">
        <title>Sites of ubiquitin attachment in Saccharomyces cerevisiae.</title>
        <authorList>
            <person name="Starita L.M."/>
            <person name="Lo R.S."/>
            <person name="Eng J.K."/>
            <person name="von Haller P.D."/>
            <person name="Fields S."/>
        </authorList>
    </citation>
    <scope>UBIQUITINATION [LARGE SCALE ANALYSIS] AT LYS-20</scope>
    <scope>IDENTIFICATION BY MASS SPECTROMETRY [LARGE SCALE ANALYSIS]</scope>
</reference>
<sequence length="1058" mass="121403">MSGSFWKFGQDFGSQSPLAKLLNRAFIKIDDKPTSTEAGKIDSNSTDESLESNSFKSEDEEEEYELPNREEDYKAYKPNLSLLNDLLDDEELYTELMCSNFKLLVYLKYPEVLSKLIDYVRNSTILESNIDRVTSEDRDLVRGEDKDTTEDFENAKADKKNIDGTFEEKERTRSGEEEELENEENDSASEDTRVTLPHELEEHDDTRRARIAAEILSADVWPISSALIENEGLLAKLWSILRLPSPLSIEASTYFMKINERLLDMNMDGIIEFILKKEHIVDDFLAHIDNPPLMDFLLKVISTDKPEISNGVIQLFKKQNLVPKLIHLLDPVFDSCTQSAAGDFLKALVTISGNCPNEITSSIGPNELTRQLVSPNMMKQLMDIMLKGGNSLNNGVGIIIELIRKNNSDYDTIQTNYTTIESHPPTDRDPIYLGYLVKMFSEHMADFNKILTEKKIPLLQTSYGTIEPLGFERFKICELIAELLHCSNMTLLNEPSAYDIVRERDAERERIFNSQNYVDSNDRSELKENEDDNTGDADDEVEDDTNQVESANTSIDGEEVIDKLNSLQIETNKVNQNMNNEEQHSLMPDFNNGDFKDEEDENPFEPQYSDVILDSSDIEKNFRVSPNVGDQLKISLQDTRVIDTMLEMFFHFQWNNFLHNVVYDVVQQIFNGPLKIGYNRFLLDDLLINIRLTDMIINGNNECIEYEKGHDTRLGYMGHLTLIAEEVTKFTAYIEEMNITFENTEVMSSLFESKWIAYTEDVLEDLKEKYNAILGDIAEEGDMLQDEEEDAVYDKGERTMGTVDDYINDIMQMDNVRCQEEEEDEGEGYVSFDEDEPQEYRNGDSVRSKESNSSEGKRDQEQLYYEYVNEDGTKTRLNFNPDSDATEQVPGEVNRDHKIPLKLKRSFTDACKSETIPNNTVNAKEESVFQFSNELSDGWESSPSNSIPKRASPSKNGMNSPMFQHQFELHSPTDEFGGHKDEILSAEGHDYDIDEYDELSDDSDEEYDNCEDEDSLDYADSAAYALCRSKSKDKISWDEEEQARLMGVVKFNSEHYRD</sequence>
<protein>
    <recommendedName>
        <fullName>SIT4-associating protein SAP185</fullName>
    </recommendedName>
</protein>
<feature type="chain" id="PRO_0000046106" description="SIT4-associating protein SAP185">
    <location>
        <begin position="1"/>
        <end position="1058"/>
    </location>
</feature>
<feature type="region of interest" description="Disordered" evidence="1">
    <location>
        <begin position="34"/>
        <end position="71"/>
    </location>
</feature>
<feature type="region of interest" description="Disordered" evidence="1">
    <location>
        <begin position="135"/>
        <end position="202"/>
    </location>
</feature>
<feature type="region of interest" description="Disordered" evidence="1">
    <location>
        <begin position="513"/>
        <end position="556"/>
    </location>
</feature>
<feature type="region of interest" description="Disordered" evidence="1">
    <location>
        <begin position="818"/>
        <end position="862"/>
    </location>
</feature>
<feature type="region of interest" description="Disordered" evidence="1">
    <location>
        <begin position="873"/>
        <end position="892"/>
    </location>
</feature>
<feature type="region of interest" description="Disordered" evidence="1">
    <location>
        <begin position="934"/>
        <end position="992"/>
    </location>
</feature>
<feature type="compositionally biased region" description="Polar residues" evidence="1">
    <location>
        <begin position="42"/>
        <end position="55"/>
    </location>
</feature>
<feature type="compositionally biased region" description="Basic and acidic residues" evidence="1">
    <location>
        <begin position="135"/>
        <end position="146"/>
    </location>
</feature>
<feature type="compositionally biased region" description="Basic and acidic residues" evidence="1">
    <location>
        <begin position="153"/>
        <end position="175"/>
    </location>
</feature>
<feature type="compositionally biased region" description="Acidic residues" evidence="1">
    <location>
        <begin position="176"/>
        <end position="189"/>
    </location>
</feature>
<feature type="compositionally biased region" description="Basic and acidic residues" evidence="1">
    <location>
        <begin position="190"/>
        <end position="202"/>
    </location>
</feature>
<feature type="compositionally biased region" description="Acidic residues" evidence="1">
    <location>
        <begin position="528"/>
        <end position="546"/>
    </location>
</feature>
<feature type="compositionally biased region" description="Acidic residues" evidence="1">
    <location>
        <begin position="820"/>
        <end position="837"/>
    </location>
</feature>
<feature type="compositionally biased region" description="Basic and acidic residues" evidence="1">
    <location>
        <begin position="838"/>
        <end position="861"/>
    </location>
</feature>
<feature type="compositionally biased region" description="Polar residues" evidence="1">
    <location>
        <begin position="934"/>
        <end position="963"/>
    </location>
</feature>
<feature type="compositionally biased region" description="Basic and acidic residues" evidence="1">
    <location>
        <begin position="967"/>
        <end position="991"/>
    </location>
</feature>
<feature type="cross-link" description="Glycyl lysine isopeptide (Lys-Gly) (interchain with G-Cter in ubiquitin)" evidence="4">
    <location>
        <position position="20"/>
    </location>
</feature>
<accession>P40856</accession>
<accession>D6VW86</accession>
<comment type="function">
    <text>Associates with the SIT4 phosphatase in a cell cycle dependent manner. May be directly or indirectly involved in SIT4-dependent functions in budding and in normal G1 cyclin expression.</text>
</comment>
<comment type="interaction">
    <interactant intactId="EBI-16384">
        <id>P40856</id>
    </interactant>
    <interactant intactId="EBI-13707">
        <id>P20604</id>
        <label>SIT4</label>
    </interactant>
    <organismsDiffer>false</organismsDiffer>
    <experiments>10</experiments>
</comment>
<comment type="PTM">
    <text>Hyperphosphorylated in the absence of SIT4.</text>
</comment>
<comment type="miscellaneous">
    <text evidence="2">Present with 11200 molecules/cell in log phase SD medium.</text>
</comment>
<comment type="similarity">
    <text evidence="3">Belongs to the SAPS family.</text>
</comment>
<organism>
    <name type="scientific">Saccharomyces cerevisiae (strain ATCC 204508 / S288c)</name>
    <name type="common">Baker's yeast</name>
    <dbReference type="NCBI Taxonomy" id="559292"/>
    <lineage>
        <taxon>Eukaryota</taxon>
        <taxon>Fungi</taxon>
        <taxon>Dikarya</taxon>
        <taxon>Ascomycota</taxon>
        <taxon>Saccharomycotina</taxon>
        <taxon>Saccharomycetes</taxon>
        <taxon>Saccharomycetales</taxon>
        <taxon>Saccharomycetaceae</taxon>
        <taxon>Saccharomyces</taxon>
    </lineage>
</organism>
<dbReference type="EMBL" id="X77923">
    <property type="protein sequence ID" value="CAA54892.1"/>
    <property type="molecule type" value="Genomic_DNA"/>
</dbReference>
<dbReference type="EMBL" id="X85021">
    <property type="protein sequence ID" value="CAA59396.1"/>
    <property type="molecule type" value="Genomic_DNA"/>
</dbReference>
<dbReference type="EMBL" id="Z49373">
    <property type="protein sequence ID" value="CAA89392.1"/>
    <property type="molecule type" value="Genomic_DNA"/>
</dbReference>
<dbReference type="EMBL" id="BK006943">
    <property type="protein sequence ID" value="DAA08702.1"/>
    <property type="molecule type" value="Genomic_DNA"/>
</dbReference>
<dbReference type="PIR" id="S50295">
    <property type="entry name" value="S50295"/>
</dbReference>
<dbReference type="RefSeq" id="NP_012437.1">
    <property type="nucleotide sequence ID" value="NM_001181531.1"/>
</dbReference>
<dbReference type="SMR" id="P40856"/>
<dbReference type="BioGRID" id="33659">
    <property type="interactions" value="210"/>
</dbReference>
<dbReference type="ComplexPortal" id="CPX-1865">
    <property type="entry name" value="SIT4-SAP185 phosphatase complex"/>
</dbReference>
<dbReference type="DIP" id="DIP-5851N"/>
<dbReference type="FunCoup" id="P40856">
    <property type="interactions" value="1127"/>
</dbReference>
<dbReference type="IntAct" id="P40856">
    <property type="interactions" value="91"/>
</dbReference>
<dbReference type="MINT" id="P40856"/>
<dbReference type="STRING" id="4932.YJL098W"/>
<dbReference type="iPTMnet" id="P40856"/>
<dbReference type="PaxDb" id="4932-YJL098W"/>
<dbReference type="PeptideAtlas" id="P40856"/>
<dbReference type="EnsemblFungi" id="YJL098W_mRNA">
    <property type="protein sequence ID" value="YJL098W"/>
    <property type="gene ID" value="YJL098W"/>
</dbReference>
<dbReference type="GeneID" id="853347"/>
<dbReference type="KEGG" id="sce:YJL098W"/>
<dbReference type="AGR" id="SGD:S000003634"/>
<dbReference type="SGD" id="S000003634">
    <property type="gene designation" value="SAP185"/>
</dbReference>
<dbReference type="VEuPathDB" id="FungiDB:YJL098W"/>
<dbReference type="eggNOG" id="KOG2073">
    <property type="taxonomic scope" value="Eukaryota"/>
</dbReference>
<dbReference type="GeneTree" id="ENSGT00390000009899"/>
<dbReference type="HOGENOM" id="CLU_003676_2_0_1"/>
<dbReference type="InParanoid" id="P40856"/>
<dbReference type="OMA" id="WDMDVQF"/>
<dbReference type="OrthoDB" id="295029at2759"/>
<dbReference type="BioCyc" id="YEAST:G3O-31553-MONOMER"/>
<dbReference type="Reactome" id="R-SCE-204005">
    <property type="pathway name" value="COPII-mediated vesicle transport"/>
</dbReference>
<dbReference type="BioGRID-ORCS" id="853347">
    <property type="hits" value="0 hits in 10 CRISPR screens"/>
</dbReference>
<dbReference type="PRO" id="PR:P40856"/>
<dbReference type="Proteomes" id="UP000002311">
    <property type="component" value="Chromosome X"/>
</dbReference>
<dbReference type="RNAct" id="P40856">
    <property type="molecule type" value="protein"/>
</dbReference>
<dbReference type="GO" id="GO:0005829">
    <property type="term" value="C:cytosol"/>
    <property type="evidence" value="ECO:0000318"/>
    <property type="project" value="GO_Central"/>
</dbReference>
<dbReference type="GO" id="GO:0005739">
    <property type="term" value="C:mitochondrion"/>
    <property type="evidence" value="ECO:0007005"/>
    <property type="project" value="SGD"/>
</dbReference>
<dbReference type="GO" id="GO:0005634">
    <property type="term" value="C:nucleus"/>
    <property type="evidence" value="ECO:0000318"/>
    <property type="project" value="GO_Central"/>
</dbReference>
<dbReference type="GO" id="GO:0019903">
    <property type="term" value="F:protein phosphatase binding"/>
    <property type="evidence" value="ECO:0007669"/>
    <property type="project" value="InterPro"/>
</dbReference>
<dbReference type="GO" id="GO:0019888">
    <property type="term" value="F:protein phosphatase regulator activity"/>
    <property type="evidence" value="ECO:0000318"/>
    <property type="project" value="GO_Central"/>
</dbReference>
<dbReference type="GO" id="GO:0000082">
    <property type="term" value="P:G1/S transition of mitotic cell cycle"/>
    <property type="evidence" value="ECO:0000315"/>
    <property type="project" value="SGD"/>
</dbReference>
<dbReference type="GO" id="GO:1903766">
    <property type="term" value="P:positive regulation of potassium ion export across plasma membrane"/>
    <property type="evidence" value="ECO:0000314"/>
    <property type="project" value="SGD"/>
</dbReference>
<dbReference type="GO" id="GO:0009966">
    <property type="term" value="P:regulation of signal transduction"/>
    <property type="evidence" value="ECO:0000318"/>
    <property type="project" value="GO_Central"/>
</dbReference>
<dbReference type="GO" id="GO:0002098">
    <property type="term" value="P:tRNA wobble uridine modification"/>
    <property type="evidence" value="ECO:0000316"/>
    <property type="project" value="SGD"/>
</dbReference>
<dbReference type="InterPro" id="IPR007587">
    <property type="entry name" value="SAPS"/>
</dbReference>
<dbReference type="PANTHER" id="PTHR12634:SF8">
    <property type="entry name" value="FIERY MOUNTAIN, ISOFORM D"/>
    <property type="match status" value="1"/>
</dbReference>
<dbReference type="PANTHER" id="PTHR12634">
    <property type="entry name" value="SIT4 YEAST -ASSOCIATING PROTEIN-RELATED"/>
    <property type="match status" value="1"/>
</dbReference>
<dbReference type="Pfam" id="PF04499">
    <property type="entry name" value="SAPS"/>
    <property type="match status" value="1"/>
</dbReference>
<keyword id="KW-0131">Cell cycle</keyword>
<keyword id="KW-1017">Isopeptide bond</keyword>
<keyword id="KW-1185">Reference proteome</keyword>
<keyword id="KW-0832">Ubl conjugation</keyword>